<name>TTCA_ECOL6</name>
<sequence length="311" mass="35488">MQENQQITKKEQYNLNKLQKRLRRNVGEAIADFNMIEEGDRIMVCLSGGKDSYTMLEILRNLQQSAPINFSLVAVNLDQKQPGFPEHVLPEYLETLGVEYKIVEENTYGIVKEKIPEGKTTCSLCSRLRRGILYRTATELGATKIALGHHRDDILQTLFLNMFYGGKMKGMPPKLMSDDGKHIVIRPLAYCREKDIQRFADAKAFPIIPCNLCGSQPNLQRQVIADMLRDWDKRYPGRIETMFSAMQNVVPSHLCDTNLFDFKGITHGSEVVNGGDLAFDREEIPLQPAGWQPEEDENQLDELRLNVVEVK</sequence>
<proteinExistence type="inferred from homology"/>
<comment type="function">
    <text evidence="1">Catalyzes the ATP-dependent 2-thiolation of cytidine in position 32 of tRNA, to form 2-thiocytidine (s(2)C32). The sulfur atoms are provided by the cysteine/cysteine desulfurase (IscS) system.</text>
</comment>
<comment type="catalytic activity">
    <reaction evidence="1">
        <text>cytidine(32) in tRNA + S-sulfanyl-L-cysteinyl-[cysteine desulfurase] + AH2 + ATP = 2-thiocytidine(32) in tRNA + L-cysteinyl-[cysteine desulfurase] + A + AMP + diphosphate + H(+)</text>
        <dbReference type="Rhea" id="RHEA:57048"/>
        <dbReference type="Rhea" id="RHEA-COMP:10288"/>
        <dbReference type="Rhea" id="RHEA-COMP:12157"/>
        <dbReference type="Rhea" id="RHEA-COMP:12158"/>
        <dbReference type="Rhea" id="RHEA-COMP:14821"/>
        <dbReference type="ChEBI" id="CHEBI:13193"/>
        <dbReference type="ChEBI" id="CHEBI:15378"/>
        <dbReference type="ChEBI" id="CHEBI:17499"/>
        <dbReference type="ChEBI" id="CHEBI:29950"/>
        <dbReference type="ChEBI" id="CHEBI:30616"/>
        <dbReference type="ChEBI" id="CHEBI:33019"/>
        <dbReference type="ChEBI" id="CHEBI:61963"/>
        <dbReference type="ChEBI" id="CHEBI:82748"/>
        <dbReference type="ChEBI" id="CHEBI:141453"/>
        <dbReference type="ChEBI" id="CHEBI:456215"/>
    </reaction>
    <physiologicalReaction direction="left-to-right" evidence="1">
        <dbReference type="Rhea" id="RHEA:57049"/>
    </physiologicalReaction>
</comment>
<comment type="cofactor">
    <cofactor evidence="1">
        <name>Mg(2+)</name>
        <dbReference type="ChEBI" id="CHEBI:18420"/>
    </cofactor>
</comment>
<comment type="cofactor">
    <cofactor evidence="1">
        <name>[4Fe-4S] cluster</name>
        <dbReference type="ChEBI" id="CHEBI:49883"/>
    </cofactor>
    <text evidence="1">Binds 1 [4Fe-4S] cluster per subunit. The cluster is chelated by three Cys residues, the fourth Fe has a free coordination site that may bind a sulfur atom transferred from the persulfide of IscS.</text>
</comment>
<comment type="pathway">
    <text evidence="1">tRNA modification.</text>
</comment>
<comment type="subunit">
    <text evidence="1">Homodimer.</text>
</comment>
<comment type="subcellular location">
    <subcellularLocation>
        <location evidence="1">Cytoplasm</location>
    </subcellularLocation>
</comment>
<comment type="miscellaneous">
    <text evidence="1">The thiolation reaction likely consists of two steps: a first activation step by ATP to form an adenylated intermediate of the target base of tRNA, and a second nucleophilic substitution step of the sulfur (S) atom supplied by the hydrosulfide attached to the Fe-S cluster.</text>
</comment>
<comment type="similarity">
    <text evidence="1">Belongs to the TtcA family.</text>
</comment>
<keyword id="KW-0004">4Fe-4S</keyword>
<keyword id="KW-0067">ATP-binding</keyword>
<keyword id="KW-0963">Cytoplasm</keyword>
<keyword id="KW-0408">Iron</keyword>
<keyword id="KW-0411">Iron-sulfur</keyword>
<keyword id="KW-0460">Magnesium</keyword>
<keyword id="KW-0479">Metal-binding</keyword>
<keyword id="KW-0547">Nucleotide-binding</keyword>
<keyword id="KW-1185">Reference proteome</keyword>
<keyword id="KW-0694">RNA-binding</keyword>
<keyword id="KW-0808">Transferase</keyword>
<keyword id="KW-0819">tRNA processing</keyword>
<keyword id="KW-0820">tRNA-binding</keyword>
<protein>
    <recommendedName>
        <fullName evidence="1">tRNA-cytidine(32) 2-sulfurtransferase</fullName>
        <ecNumber evidence="1">2.8.1.-</ecNumber>
    </recommendedName>
    <alternativeName>
        <fullName evidence="1">Two-thiocytidine biosynthesis protein A</fullName>
    </alternativeName>
    <alternativeName>
        <fullName evidence="1">tRNA 2-thiocytidine biosynthesis protein TtcA</fullName>
    </alternativeName>
</protein>
<evidence type="ECO:0000255" key="1">
    <source>
        <dbReference type="HAMAP-Rule" id="MF_01850"/>
    </source>
</evidence>
<reference key="1">
    <citation type="journal article" date="2002" name="Proc. Natl. Acad. Sci. U.S.A.">
        <title>Extensive mosaic structure revealed by the complete genome sequence of uropathogenic Escherichia coli.</title>
        <authorList>
            <person name="Welch R.A."/>
            <person name="Burland V."/>
            <person name="Plunkett G. III"/>
            <person name="Redford P."/>
            <person name="Roesch P."/>
            <person name="Rasko D."/>
            <person name="Buckles E.L."/>
            <person name="Liou S.-R."/>
            <person name="Boutin A."/>
            <person name="Hackett J."/>
            <person name="Stroud D."/>
            <person name="Mayhew G.F."/>
            <person name="Rose D.J."/>
            <person name="Zhou S."/>
            <person name="Schwartz D.C."/>
            <person name="Perna N.T."/>
            <person name="Mobley H.L.T."/>
            <person name="Donnenberg M.S."/>
            <person name="Blattner F.R."/>
        </authorList>
    </citation>
    <scope>NUCLEOTIDE SEQUENCE [LARGE SCALE GENOMIC DNA]</scope>
    <source>
        <strain>CFT073 / ATCC 700928 / UPEC</strain>
    </source>
</reference>
<organism>
    <name type="scientific">Escherichia coli O6:H1 (strain CFT073 / ATCC 700928 / UPEC)</name>
    <dbReference type="NCBI Taxonomy" id="199310"/>
    <lineage>
        <taxon>Bacteria</taxon>
        <taxon>Pseudomonadati</taxon>
        <taxon>Pseudomonadota</taxon>
        <taxon>Gammaproteobacteria</taxon>
        <taxon>Enterobacterales</taxon>
        <taxon>Enterobacteriaceae</taxon>
        <taxon>Escherichia</taxon>
    </lineage>
</organism>
<gene>
    <name evidence="1" type="primary">ttcA</name>
    <name type="ordered locus">c1818</name>
</gene>
<accession>Q8FHP6</accession>
<dbReference type="EC" id="2.8.1.-" evidence="1"/>
<dbReference type="EMBL" id="AE014075">
    <property type="protein sequence ID" value="AAN80282.1"/>
    <property type="molecule type" value="Genomic_DNA"/>
</dbReference>
<dbReference type="RefSeq" id="WP_001157412.1">
    <property type="nucleotide sequence ID" value="NZ_CP051263.1"/>
</dbReference>
<dbReference type="SMR" id="Q8FHP6"/>
<dbReference type="STRING" id="199310.c1818"/>
<dbReference type="KEGG" id="ecc:c1818"/>
<dbReference type="eggNOG" id="COG0037">
    <property type="taxonomic scope" value="Bacteria"/>
</dbReference>
<dbReference type="HOGENOM" id="CLU_026481_0_0_6"/>
<dbReference type="BioCyc" id="ECOL199310:C1818-MONOMER"/>
<dbReference type="Proteomes" id="UP000001410">
    <property type="component" value="Chromosome"/>
</dbReference>
<dbReference type="GO" id="GO:0005737">
    <property type="term" value="C:cytoplasm"/>
    <property type="evidence" value="ECO:0007669"/>
    <property type="project" value="UniProtKB-SubCell"/>
</dbReference>
<dbReference type="GO" id="GO:0051539">
    <property type="term" value="F:4 iron, 4 sulfur cluster binding"/>
    <property type="evidence" value="ECO:0007669"/>
    <property type="project" value="UniProtKB-UniRule"/>
</dbReference>
<dbReference type="GO" id="GO:0005524">
    <property type="term" value="F:ATP binding"/>
    <property type="evidence" value="ECO:0007669"/>
    <property type="project" value="UniProtKB-UniRule"/>
</dbReference>
<dbReference type="GO" id="GO:0000287">
    <property type="term" value="F:magnesium ion binding"/>
    <property type="evidence" value="ECO:0007669"/>
    <property type="project" value="UniProtKB-UniRule"/>
</dbReference>
<dbReference type="GO" id="GO:0016783">
    <property type="term" value="F:sulfurtransferase activity"/>
    <property type="evidence" value="ECO:0007669"/>
    <property type="project" value="UniProtKB-UniRule"/>
</dbReference>
<dbReference type="GO" id="GO:0000049">
    <property type="term" value="F:tRNA binding"/>
    <property type="evidence" value="ECO:0007669"/>
    <property type="project" value="UniProtKB-KW"/>
</dbReference>
<dbReference type="GO" id="GO:0034227">
    <property type="term" value="P:tRNA thio-modification"/>
    <property type="evidence" value="ECO:0007669"/>
    <property type="project" value="UniProtKB-UniRule"/>
</dbReference>
<dbReference type="CDD" id="cd24138">
    <property type="entry name" value="TtcA-like"/>
    <property type="match status" value="1"/>
</dbReference>
<dbReference type="FunFam" id="3.40.50.620:FF:000046">
    <property type="entry name" value="tRNA-cytidine(32) 2-sulfurtransferase"/>
    <property type="match status" value="1"/>
</dbReference>
<dbReference type="Gene3D" id="3.40.50.620">
    <property type="entry name" value="HUPs"/>
    <property type="match status" value="1"/>
</dbReference>
<dbReference type="HAMAP" id="MF_01850">
    <property type="entry name" value="TtcA"/>
    <property type="match status" value="1"/>
</dbReference>
<dbReference type="InterPro" id="IPR014729">
    <property type="entry name" value="Rossmann-like_a/b/a_fold"/>
</dbReference>
<dbReference type="InterPro" id="IPR011063">
    <property type="entry name" value="TilS/TtcA_N"/>
</dbReference>
<dbReference type="InterPro" id="IPR012089">
    <property type="entry name" value="tRNA_Cyd_32_2_STrfase"/>
</dbReference>
<dbReference type="InterPro" id="IPR035107">
    <property type="entry name" value="tRNA_thiolation_TtcA_Ctu1"/>
</dbReference>
<dbReference type="NCBIfam" id="NF007972">
    <property type="entry name" value="PRK10696.1"/>
    <property type="match status" value="1"/>
</dbReference>
<dbReference type="PANTHER" id="PTHR43686:SF1">
    <property type="entry name" value="AMINOTRAN_5 DOMAIN-CONTAINING PROTEIN"/>
    <property type="match status" value="1"/>
</dbReference>
<dbReference type="PANTHER" id="PTHR43686">
    <property type="entry name" value="SULFURTRANSFERASE-RELATED"/>
    <property type="match status" value="1"/>
</dbReference>
<dbReference type="Pfam" id="PF01171">
    <property type="entry name" value="ATP_bind_3"/>
    <property type="match status" value="1"/>
</dbReference>
<dbReference type="PIRSF" id="PIRSF004976">
    <property type="entry name" value="ATPase_YdaO"/>
    <property type="match status" value="1"/>
</dbReference>
<dbReference type="SUPFAM" id="SSF52402">
    <property type="entry name" value="Adenine nucleotide alpha hydrolases-like"/>
    <property type="match status" value="1"/>
</dbReference>
<feature type="chain" id="PRO_0000348724" description="tRNA-cytidine(32) 2-sulfurtransferase">
    <location>
        <begin position="1"/>
        <end position="311"/>
    </location>
</feature>
<feature type="short sequence motif" description="PP-loop motif" evidence="1">
    <location>
        <begin position="47"/>
        <end position="52"/>
    </location>
</feature>
<feature type="binding site" evidence="1">
    <location>
        <position position="122"/>
    </location>
    <ligand>
        <name>[4Fe-4S] cluster</name>
        <dbReference type="ChEBI" id="CHEBI:49883"/>
    </ligand>
</feature>
<feature type="binding site" evidence="1">
    <location>
        <position position="125"/>
    </location>
    <ligand>
        <name>[4Fe-4S] cluster</name>
        <dbReference type="ChEBI" id="CHEBI:49883"/>
    </ligand>
</feature>
<feature type="binding site" evidence="1">
    <location>
        <position position="213"/>
    </location>
    <ligand>
        <name>[4Fe-4S] cluster</name>
        <dbReference type="ChEBI" id="CHEBI:49883"/>
    </ligand>
</feature>